<name>NEAS1_HUMAN</name>
<reference key="1">
    <citation type="journal article" date="2004" name="Nat. Genet.">
        <title>Complete sequencing and characterization of 21,243 full-length human cDNAs.</title>
        <authorList>
            <person name="Ota T."/>
            <person name="Suzuki Y."/>
            <person name="Nishikawa T."/>
            <person name="Otsuki T."/>
            <person name="Sugiyama T."/>
            <person name="Irie R."/>
            <person name="Wakamatsu A."/>
            <person name="Hayashi K."/>
            <person name="Sato H."/>
            <person name="Nagai K."/>
            <person name="Kimura K."/>
            <person name="Makita H."/>
            <person name="Sekine M."/>
            <person name="Obayashi M."/>
            <person name="Nishi T."/>
            <person name="Shibahara T."/>
            <person name="Tanaka T."/>
            <person name="Ishii S."/>
            <person name="Yamamoto J."/>
            <person name="Saito K."/>
            <person name="Kawai Y."/>
            <person name="Isono Y."/>
            <person name="Nakamura Y."/>
            <person name="Nagahari K."/>
            <person name="Murakami K."/>
            <person name="Yasuda T."/>
            <person name="Iwayanagi T."/>
            <person name="Wagatsuma M."/>
            <person name="Shiratori A."/>
            <person name="Sudo H."/>
            <person name="Hosoiri T."/>
            <person name="Kaku Y."/>
            <person name="Kodaira H."/>
            <person name="Kondo H."/>
            <person name="Sugawara M."/>
            <person name="Takahashi M."/>
            <person name="Kanda K."/>
            <person name="Yokoi T."/>
            <person name="Furuya T."/>
            <person name="Kikkawa E."/>
            <person name="Omura Y."/>
            <person name="Abe K."/>
            <person name="Kamihara K."/>
            <person name="Katsuta N."/>
            <person name="Sato K."/>
            <person name="Tanikawa M."/>
            <person name="Yamazaki M."/>
            <person name="Ninomiya K."/>
            <person name="Ishibashi T."/>
            <person name="Yamashita H."/>
            <person name="Murakawa K."/>
            <person name="Fujimori K."/>
            <person name="Tanai H."/>
            <person name="Kimata M."/>
            <person name="Watanabe M."/>
            <person name="Hiraoka S."/>
            <person name="Chiba Y."/>
            <person name="Ishida S."/>
            <person name="Ono Y."/>
            <person name="Takiguchi S."/>
            <person name="Watanabe S."/>
            <person name="Yosida M."/>
            <person name="Hotuta T."/>
            <person name="Kusano J."/>
            <person name="Kanehori K."/>
            <person name="Takahashi-Fujii A."/>
            <person name="Hara H."/>
            <person name="Tanase T.-O."/>
            <person name="Nomura Y."/>
            <person name="Togiya S."/>
            <person name="Komai F."/>
            <person name="Hara R."/>
            <person name="Takeuchi K."/>
            <person name="Arita M."/>
            <person name="Imose N."/>
            <person name="Musashino K."/>
            <person name="Yuuki H."/>
            <person name="Oshima A."/>
            <person name="Sasaki N."/>
            <person name="Aotsuka S."/>
            <person name="Yoshikawa Y."/>
            <person name="Matsunawa H."/>
            <person name="Ichihara T."/>
            <person name="Shiohata N."/>
            <person name="Sano S."/>
            <person name="Moriya S."/>
            <person name="Momiyama H."/>
            <person name="Satoh N."/>
            <person name="Takami S."/>
            <person name="Terashima Y."/>
            <person name="Suzuki O."/>
            <person name="Nakagawa S."/>
            <person name="Senoh A."/>
            <person name="Mizoguchi H."/>
            <person name="Goto Y."/>
            <person name="Shimizu F."/>
            <person name="Wakebe H."/>
            <person name="Hishigaki H."/>
            <person name="Watanabe T."/>
            <person name="Sugiyama A."/>
            <person name="Takemoto M."/>
            <person name="Kawakami B."/>
            <person name="Yamazaki M."/>
            <person name="Watanabe K."/>
            <person name="Kumagai A."/>
            <person name="Itakura S."/>
            <person name="Fukuzumi Y."/>
            <person name="Fujimori Y."/>
            <person name="Komiyama M."/>
            <person name="Tashiro H."/>
            <person name="Tanigami A."/>
            <person name="Fujiwara T."/>
            <person name="Ono T."/>
            <person name="Yamada K."/>
            <person name="Fujii Y."/>
            <person name="Ozaki K."/>
            <person name="Hirao M."/>
            <person name="Ohmori Y."/>
            <person name="Kawabata A."/>
            <person name="Hikiji T."/>
            <person name="Kobatake N."/>
            <person name="Inagaki H."/>
            <person name="Ikema Y."/>
            <person name="Okamoto S."/>
            <person name="Okitani R."/>
            <person name="Kawakami T."/>
            <person name="Noguchi S."/>
            <person name="Itoh T."/>
            <person name="Shigeta K."/>
            <person name="Senba T."/>
            <person name="Matsumura K."/>
            <person name="Nakajima Y."/>
            <person name="Mizuno T."/>
            <person name="Morinaga M."/>
            <person name="Sasaki M."/>
            <person name="Togashi T."/>
            <person name="Oyama M."/>
            <person name="Hata H."/>
            <person name="Watanabe M."/>
            <person name="Komatsu T."/>
            <person name="Mizushima-Sugano J."/>
            <person name="Satoh T."/>
            <person name="Shirai Y."/>
            <person name="Takahashi Y."/>
            <person name="Nakagawa K."/>
            <person name="Okumura K."/>
            <person name="Nagase T."/>
            <person name="Nomura N."/>
            <person name="Kikuchi H."/>
            <person name="Masuho Y."/>
            <person name="Yamashita R."/>
            <person name="Nakai K."/>
            <person name="Yada T."/>
            <person name="Nakamura Y."/>
            <person name="Ohara O."/>
            <person name="Isogai T."/>
            <person name="Sugano S."/>
        </authorList>
    </citation>
    <scope>NUCLEOTIDE SEQUENCE [LARGE SCALE MRNA]</scope>
    <source>
        <tissue>Placenta</tissue>
    </source>
</reference>
<organism>
    <name type="scientific">Homo sapiens</name>
    <name type="common">Human</name>
    <dbReference type="NCBI Taxonomy" id="9606"/>
    <lineage>
        <taxon>Eukaryota</taxon>
        <taxon>Metazoa</taxon>
        <taxon>Chordata</taxon>
        <taxon>Craniata</taxon>
        <taxon>Vertebrata</taxon>
        <taxon>Euteleostomi</taxon>
        <taxon>Mammalia</taxon>
        <taxon>Eutheria</taxon>
        <taxon>Euarchontoglires</taxon>
        <taxon>Primates</taxon>
        <taxon>Haplorrhini</taxon>
        <taxon>Catarrhini</taxon>
        <taxon>Hominidae</taxon>
        <taxon>Homo</taxon>
    </lineage>
</organism>
<evidence type="ECO:0000256" key="1">
    <source>
        <dbReference type="SAM" id="MobiDB-lite"/>
    </source>
</evidence>
<evidence type="ECO:0000305" key="2"/>
<sequence>MVWRFQKHIGKGSSQERPIRKDFLTGTAGRDGDRGWGKWWGTALNFPKDPKGSAEGSAPTPLTEGSLPTVGNAPETQPTRRRGAGQRHCNQKPKAGRHFQTLGQPLVGTPPSPQDAAPRQGSPGPGPARTTAVWRPAPSGAAAEHGQKPQTPSASLQPPFPPPPPPGDPTPPSPLPPAHVPPTLLTLQEPVTGEGTSFRVEGLCASRLAVGRGLGALAANTSAPAAGSPLAAAAAAAAAVSSSKFP</sequence>
<keyword id="KW-1185">Reference proteome</keyword>
<comment type="caution">
    <text evidence="2">Product of a dubious CDS prediction. May be a non-coding RNA.</text>
</comment>
<protein>
    <recommendedName>
        <fullName>Putative uncharacterized protein NEXN-AS1</fullName>
    </recommendedName>
    <alternativeName>
        <fullName>NEXN antisense RNA 1</fullName>
    </alternativeName>
</protein>
<feature type="chain" id="PRO_0000280402" description="Putative uncharacterized protein NEXN-AS1">
    <location>
        <begin position="1"/>
        <end position="246"/>
    </location>
</feature>
<feature type="region of interest" description="Disordered" evidence="1">
    <location>
        <begin position="1"/>
        <end position="184"/>
    </location>
</feature>
<feature type="compositionally biased region" description="Basic residues" evidence="1">
    <location>
        <begin position="1"/>
        <end position="10"/>
    </location>
</feature>
<feature type="compositionally biased region" description="Basic residues" evidence="1">
    <location>
        <begin position="79"/>
        <end position="97"/>
    </location>
</feature>
<feature type="compositionally biased region" description="Pro residues" evidence="1">
    <location>
        <begin position="158"/>
        <end position="180"/>
    </location>
</feature>
<proteinExistence type="uncertain"/>
<dbReference type="EMBL" id="AK075118">
    <property type="protein sequence ID" value="BAC11413.1"/>
    <property type="molecule type" value="mRNA"/>
</dbReference>
<dbReference type="IntAct" id="Q8NBZ9">
    <property type="interactions" value="1"/>
</dbReference>
<dbReference type="GlyGen" id="Q8NBZ9">
    <property type="glycosylation" value="1 site"/>
</dbReference>
<dbReference type="BioMuta" id="HGNC:31983"/>
<dbReference type="MassIVE" id="Q8NBZ9"/>
<dbReference type="ProteomicsDB" id="72839"/>
<dbReference type="AGR" id="HGNC:31983"/>
<dbReference type="GeneCards" id="NEXN-AS1"/>
<dbReference type="HGNC" id="HGNC:31983">
    <property type="gene designation" value="NEXN-AS1"/>
</dbReference>
<dbReference type="neXtProt" id="NX_Q8NBZ9"/>
<dbReference type="InParanoid" id="Q8NBZ9"/>
<dbReference type="PAN-GO" id="Q8NBZ9">
    <property type="GO annotations" value="0 GO annotations based on evolutionary models"/>
</dbReference>
<dbReference type="PathwayCommons" id="Q8NBZ9"/>
<dbReference type="SignaLink" id="Q8NBZ9"/>
<dbReference type="Pharos" id="Q8NBZ9">
    <property type="development level" value="Tdark"/>
</dbReference>
<dbReference type="Proteomes" id="UP000005640">
    <property type="component" value="Unplaced"/>
</dbReference>
<dbReference type="RNAct" id="Q8NBZ9">
    <property type="molecule type" value="protein"/>
</dbReference>
<gene>
    <name type="primary">NEXN-AS1</name>
    <name type="synonym">C1orf118</name>
</gene>
<accession>Q8NBZ9</accession>